<organism>
    <name type="scientific">Escherichia coli O1:K1 / APEC</name>
    <dbReference type="NCBI Taxonomy" id="405955"/>
    <lineage>
        <taxon>Bacteria</taxon>
        <taxon>Pseudomonadati</taxon>
        <taxon>Pseudomonadota</taxon>
        <taxon>Gammaproteobacteria</taxon>
        <taxon>Enterobacterales</taxon>
        <taxon>Enterobacteriaceae</taxon>
        <taxon>Escherichia</taxon>
    </lineage>
</organism>
<feature type="chain" id="PRO_1000050611" description="Peptidase E">
    <location>
        <begin position="1"/>
        <end position="229"/>
    </location>
</feature>
<feature type="active site" description="Charge relay system" evidence="1">
    <location>
        <position position="120"/>
    </location>
</feature>
<feature type="active site" description="Charge relay system" evidence="1">
    <location>
        <position position="135"/>
    </location>
</feature>
<feature type="active site" description="Charge relay system" evidence="1">
    <location>
        <position position="157"/>
    </location>
</feature>
<reference key="1">
    <citation type="journal article" date="2007" name="J. Bacteriol.">
        <title>The genome sequence of avian pathogenic Escherichia coli strain O1:K1:H7 shares strong similarities with human extraintestinal pathogenic E. coli genomes.</title>
        <authorList>
            <person name="Johnson T.J."/>
            <person name="Kariyawasam S."/>
            <person name="Wannemuehler Y."/>
            <person name="Mangiamele P."/>
            <person name="Johnson S.J."/>
            <person name="Doetkott C."/>
            <person name="Skyberg J.A."/>
            <person name="Lynne A.M."/>
            <person name="Johnson J.R."/>
            <person name="Nolan L.K."/>
        </authorList>
    </citation>
    <scope>NUCLEOTIDE SEQUENCE [LARGE SCALE GENOMIC DNA]</scope>
</reference>
<comment type="function">
    <text evidence="1">Hydrolyzes dipeptides containing N-terminal aspartate residues. May play a role in allowing the cell to use peptide aspartate to spare carbon otherwise required for the synthesis of the aspartate family of amino acids.</text>
</comment>
<comment type="catalytic activity">
    <reaction evidence="1">
        <text>Dipeptidase E catalyzes the hydrolysis of dipeptides Asp-|-Xaa. It does not act on peptides with N-terminal Glu, Asn or Gln, nor does it cleave isoaspartyl peptides.</text>
        <dbReference type="EC" id="3.4.13.21"/>
    </reaction>
</comment>
<comment type="subcellular location">
    <subcellularLocation>
        <location evidence="1">Cytoplasm</location>
    </subcellularLocation>
</comment>
<comment type="similarity">
    <text evidence="1">Belongs to the peptidase S51 family.</text>
</comment>
<accession>A1AIJ2</accession>
<gene>
    <name evidence="1" type="primary">pepE</name>
    <name type="ordered locus">Ecok1_39880</name>
    <name type="ORF">APECO1_2454</name>
</gene>
<name>PEPE_ECOK1</name>
<proteinExistence type="inferred from homology"/>
<keyword id="KW-0963">Cytoplasm</keyword>
<keyword id="KW-0224">Dipeptidase</keyword>
<keyword id="KW-0378">Hydrolase</keyword>
<keyword id="KW-0645">Protease</keyword>
<keyword id="KW-1185">Reference proteome</keyword>
<keyword id="KW-0720">Serine protease</keyword>
<protein>
    <recommendedName>
        <fullName evidence="1">Peptidase E</fullName>
        <ecNumber evidence="1">3.4.13.21</ecNumber>
    </recommendedName>
    <alternativeName>
        <fullName evidence="1">Alpha-aspartyl dipeptidase</fullName>
    </alternativeName>
    <alternativeName>
        <fullName evidence="1">Asp-specific dipeptidase</fullName>
    </alternativeName>
    <alternativeName>
        <fullName evidence="1">Dipeptidase E</fullName>
    </alternativeName>
</protein>
<evidence type="ECO:0000255" key="1">
    <source>
        <dbReference type="HAMAP-Rule" id="MF_00510"/>
    </source>
</evidence>
<dbReference type="EC" id="3.4.13.21" evidence="1"/>
<dbReference type="EMBL" id="CP000468">
    <property type="protein sequence ID" value="ABJ03482.1"/>
    <property type="molecule type" value="Genomic_DNA"/>
</dbReference>
<dbReference type="RefSeq" id="WP_000421763.1">
    <property type="nucleotide sequence ID" value="NZ_CADILS010000008.1"/>
</dbReference>
<dbReference type="SMR" id="A1AIJ2"/>
<dbReference type="MEROPS" id="S51.001"/>
<dbReference type="GeneID" id="93777874"/>
<dbReference type="KEGG" id="ecv:APECO1_2454"/>
<dbReference type="HOGENOM" id="CLU_071689_0_0_6"/>
<dbReference type="Proteomes" id="UP000008216">
    <property type="component" value="Chromosome"/>
</dbReference>
<dbReference type="GO" id="GO:0005737">
    <property type="term" value="C:cytoplasm"/>
    <property type="evidence" value="ECO:0007669"/>
    <property type="project" value="UniProtKB-SubCell"/>
</dbReference>
<dbReference type="GO" id="GO:0016805">
    <property type="term" value="F:dipeptidase activity"/>
    <property type="evidence" value="ECO:0007669"/>
    <property type="project" value="UniProtKB-UniRule"/>
</dbReference>
<dbReference type="GO" id="GO:0008236">
    <property type="term" value="F:serine-type peptidase activity"/>
    <property type="evidence" value="ECO:0007669"/>
    <property type="project" value="UniProtKB-KW"/>
</dbReference>
<dbReference type="GO" id="GO:0006508">
    <property type="term" value="P:proteolysis"/>
    <property type="evidence" value="ECO:0007669"/>
    <property type="project" value="UniProtKB-UniRule"/>
</dbReference>
<dbReference type="CDD" id="cd03146">
    <property type="entry name" value="GAT1_Peptidase_E"/>
    <property type="match status" value="1"/>
</dbReference>
<dbReference type="FunFam" id="3.40.50.880:FF:000007">
    <property type="entry name" value="Peptidase E"/>
    <property type="match status" value="1"/>
</dbReference>
<dbReference type="Gene3D" id="3.40.50.880">
    <property type="match status" value="1"/>
</dbReference>
<dbReference type="HAMAP" id="MF_00510">
    <property type="entry name" value="Peptidase_E"/>
    <property type="match status" value="1"/>
</dbReference>
<dbReference type="InterPro" id="IPR029062">
    <property type="entry name" value="Class_I_gatase-like"/>
</dbReference>
<dbReference type="InterPro" id="IPR005320">
    <property type="entry name" value="Peptidase_S51"/>
</dbReference>
<dbReference type="InterPro" id="IPR023172">
    <property type="entry name" value="Peptidase_S51_dipeptidase-E"/>
</dbReference>
<dbReference type="NCBIfam" id="NF003642">
    <property type="entry name" value="PRK05282.1"/>
    <property type="match status" value="1"/>
</dbReference>
<dbReference type="PANTHER" id="PTHR20842:SF0">
    <property type="entry name" value="ALPHA-ASPARTYL DIPEPTIDASE"/>
    <property type="match status" value="1"/>
</dbReference>
<dbReference type="PANTHER" id="PTHR20842">
    <property type="entry name" value="PROTEASE S51 ALPHA-ASPARTYL DIPEPTIDASE"/>
    <property type="match status" value="1"/>
</dbReference>
<dbReference type="Pfam" id="PF03575">
    <property type="entry name" value="Peptidase_S51"/>
    <property type="match status" value="1"/>
</dbReference>
<dbReference type="SUPFAM" id="SSF52317">
    <property type="entry name" value="Class I glutamine amidotransferase-like"/>
    <property type="match status" value="1"/>
</dbReference>
<sequence length="229" mass="24570">MELLLLSNSTLPGKAWLEHALPLIAEQLQGRRSAVFIPFAGVTQTWDDYTAKTAAVLAPLGVSVTGIHSVVDPVAAIENAEIVIVGGGNTFQLLKQCRERGLLAPITDVVKRGALYIGWSAGANLACPTIRTTNDMPIVDPQGFDALNLFPLQINPHFTNALPEGHKGETREQRIRELLVVAPELTIIGLPEGNWITVSKGHATLGGPNTTYVFKAGEEAVPLEAGHRF</sequence>